<dbReference type="EMBL" id="CP000378">
    <property type="protein sequence ID" value="ABF75120.1"/>
    <property type="molecule type" value="Genomic_DNA"/>
</dbReference>
<dbReference type="SMR" id="Q1BZ35"/>
<dbReference type="HOGENOM" id="CLU_087936_0_0_4"/>
<dbReference type="GO" id="GO:0005737">
    <property type="term" value="C:cytoplasm"/>
    <property type="evidence" value="ECO:0007669"/>
    <property type="project" value="UniProtKB-SubCell"/>
</dbReference>
<dbReference type="GO" id="GO:0009379">
    <property type="term" value="C:Holliday junction helicase complex"/>
    <property type="evidence" value="ECO:0007669"/>
    <property type="project" value="InterPro"/>
</dbReference>
<dbReference type="GO" id="GO:0048476">
    <property type="term" value="C:Holliday junction resolvase complex"/>
    <property type="evidence" value="ECO:0007669"/>
    <property type="project" value="UniProtKB-UniRule"/>
</dbReference>
<dbReference type="GO" id="GO:0005524">
    <property type="term" value="F:ATP binding"/>
    <property type="evidence" value="ECO:0007669"/>
    <property type="project" value="InterPro"/>
</dbReference>
<dbReference type="GO" id="GO:0000400">
    <property type="term" value="F:four-way junction DNA binding"/>
    <property type="evidence" value="ECO:0007669"/>
    <property type="project" value="UniProtKB-UniRule"/>
</dbReference>
<dbReference type="GO" id="GO:0009378">
    <property type="term" value="F:four-way junction helicase activity"/>
    <property type="evidence" value="ECO:0007669"/>
    <property type="project" value="InterPro"/>
</dbReference>
<dbReference type="GO" id="GO:0006310">
    <property type="term" value="P:DNA recombination"/>
    <property type="evidence" value="ECO:0007669"/>
    <property type="project" value="UniProtKB-UniRule"/>
</dbReference>
<dbReference type="GO" id="GO:0006281">
    <property type="term" value="P:DNA repair"/>
    <property type="evidence" value="ECO:0007669"/>
    <property type="project" value="UniProtKB-UniRule"/>
</dbReference>
<dbReference type="CDD" id="cd14332">
    <property type="entry name" value="UBA_RuvA_C"/>
    <property type="match status" value="1"/>
</dbReference>
<dbReference type="Gene3D" id="1.10.150.20">
    <property type="entry name" value="5' to 3' exonuclease, C-terminal subdomain"/>
    <property type="match status" value="1"/>
</dbReference>
<dbReference type="Gene3D" id="1.10.8.10">
    <property type="entry name" value="DNA helicase RuvA subunit, C-terminal domain"/>
    <property type="match status" value="1"/>
</dbReference>
<dbReference type="Gene3D" id="2.40.50.140">
    <property type="entry name" value="Nucleic acid-binding proteins"/>
    <property type="match status" value="1"/>
</dbReference>
<dbReference type="HAMAP" id="MF_00031">
    <property type="entry name" value="DNA_HJ_migration_RuvA"/>
    <property type="match status" value="1"/>
</dbReference>
<dbReference type="InterPro" id="IPR013849">
    <property type="entry name" value="DNA_helicase_Holl-junc_RuvA_I"/>
</dbReference>
<dbReference type="InterPro" id="IPR003583">
    <property type="entry name" value="Hlx-hairpin-Hlx_DNA-bd_motif"/>
</dbReference>
<dbReference type="InterPro" id="IPR012340">
    <property type="entry name" value="NA-bd_OB-fold"/>
</dbReference>
<dbReference type="InterPro" id="IPR000085">
    <property type="entry name" value="RuvA"/>
</dbReference>
<dbReference type="InterPro" id="IPR010994">
    <property type="entry name" value="RuvA_2-like"/>
</dbReference>
<dbReference type="InterPro" id="IPR011114">
    <property type="entry name" value="RuvA_C"/>
</dbReference>
<dbReference type="InterPro" id="IPR036267">
    <property type="entry name" value="RuvA_C_sf"/>
</dbReference>
<dbReference type="NCBIfam" id="TIGR00084">
    <property type="entry name" value="ruvA"/>
    <property type="match status" value="1"/>
</dbReference>
<dbReference type="Pfam" id="PF14520">
    <property type="entry name" value="HHH_5"/>
    <property type="match status" value="1"/>
</dbReference>
<dbReference type="Pfam" id="PF07499">
    <property type="entry name" value="RuvA_C"/>
    <property type="match status" value="1"/>
</dbReference>
<dbReference type="Pfam" id="PF01330">
    <property type="entry name" value="RuvA_N"/>
    <property type="match status" value="1"/>
</dbReference>
<dbReference type="SMART" id="SM00278">
    <property type="entry name" value="HhH1"/>
    <property type="match status" value="2"/>
</dbReference>
<dbReference type="SUPFAM" id="SSF46929">
    <property type="entry name" value="DNA helicase RuvA subunit, C-terminal domain"/>
    <property type="match status" value="1"/>
</dbReference>
<dbReference type="SUPFAM" id="SSF50249">
    <property type="entry name" value="Nucleic acid-binding proteins"/>
    <property type="match status" value="1"/>
</dbReference>
<dbReference type="SUPFAM" id="SSF47781">
    <property type="entry name" value="RuvA domain 2-like"/>
    <property type="match status" value="1"/>
</dbReference>
<gene>
    <name evidence="1" type="primary">ruvA</name>
    <name type="ordered locus">Bcen_0206</name>
</gene>
<feature type="chain" id="PRO_1000002408" description="Holliday junction branch migration complex subunit RuvA">
    <location>
        <begin position="1"/>
        <end position="193"/>
    </location>
</feature>
<feature type="region of interest" description="Domain I" evidence="1">
    <location>
        <begin position="1"/>
        <end position="64"/>
    </location>
</feature>
<feature type="region of interest" description="Domain II" evidence="1">
    <location>
        <begin position="65"/>
        <end position="139"/>
    </location>
</feature>
<feature type="region of interest" description="Flexible linker" evidence="1">
    <location>
        <begin position="139"/>
        <end position="143"/>
    </location>
</feature>
<feature type="region of interest" description="Domain III" evidence="1">
    <location>
        <begin position="144"/>
        <end position="193"/>
    </location>
</feature>
<protein>
    <recommendedName>
        <fullName evidence="1">Holliday junction branch migration complex subunit RuvA</fullName>
    </recommendedName>
</protein>
<evidence type="ECO:0000255" key="1">
    <source>
        <dbReference type="HAMAP-Rule" id="MF_00031"/>
    </source>
</evidence>
<organism>
    <name type="scientific">Burkholderia orbicola (strain AU 1054)</name>
    <dbReference type="NCBI Taxonomy" id="331271"/>
    <lineage>
        <taxon>Bacteria</taxon>
        <taxon>Pseudomonadati</taxon>
        <taxon>Pseudomonadota</taxon>
        <taxon>Betaproteobacteria</taxon>
        <taxon>Burkholderiales</taxon>
        <taxon>Burkholderiaceae</taxon>
        <taxon>Burkholderia</taxon>
        <taxon>Burkholderia cepacia complex</taxon>
        <taxon>Burkholderia orbicola</taxon>
    </lineage>
</organism>
<keyword id="KW-0963">Cytoplasm</keyword>
<keyword id="KW-0227">DNA damage</keyword>
<keyword id="KW-0233">DNA recombination</keyword>
<keyword id="KW-0234">DNA repair</keyword>
<keyword id="KW-0238">DNA-binding</keyword>
<reference key="1">
    <citation type="submission" date="2006-05" db="EMBL/GenBank/DDBJ databases">
        <title>Complete sequence of chromosome 1 of Burkholderia cenocepacia AU 1054.</title>
        <authorList>
            <consortium name="US DOE Joint Genome Institute"/>
            <person name="Copeland A."/>
            <person name="Lucas S."/>
            <person name="Lapidus A."/>
            <person name="Barry K."/>
            <person name="Detter J.C."/>
            <person name="Glavina del Rio T."/>
            <person name="Hammon N."/>
            <person name="Israni S."/>
            <person name="Dalin E."/>
            <person name="Tice H."/>
            <person name="Pitluck S."/>
            <person name="Chain P."/>
            <person name="Malfatti S."/>
            <person name="Shin M."/>
            <person name="Vergez L."/>
            <person name="Schmutz J."/>
            <person name="Larimer F."/>
            <person name="Land M."/>
            <person name="Hauser L."/>
            <person name="Kyrpides N."/>
            <person name="Lykidis A."/>
            <person name="LiPuma J.J."/>
            <person name="Konstantinidis K."/>
            <person name="Tiedje J.M."/>
            <person name="Richardson P."/>
        </authorList>
    </citation>
    <scope>NUCLEOTIDE SEQUENCE [LARGE SCALE GENOMIC DNA]</scope>
    <source>
        <strain>AU 1054</strain>
    </source>
</reference>
<accession>Q1BZ35</accession>
<proteinExistence type="inferred from homology"/>
<name>RUVA_BURO1</name>
<comment type="function">
    <text evidence="1">The RuvA-RuvB-RuvC complex processes Holliday junction (HJ) DNA during genetic recombination and DNA repair, while the RuvA-RuvB complex plays an important role in the rescue of blocked DNA replication forks via replication fork reversal (RFR). RuvA specifically binds to HJ cruciform DNA, conferring on it an open structure. The RuvB hexamer acts as an ATP-dependent pump, pulling dsDNA into and through the RuvAB complex. HJ branch migration allows RuvC to scan DNA until it finds its consensus sequence, where it cleaves and resolves the cruciform DNA.</text>
</comment>
<comment type="subunit">
    <text evidence="1">Homotetramer. Forms an RuvA(8)-RuvB(12)-Holliday junction (HJ) complex. HJ DNA is sandwiched between 2 RuvA tetramers; dsDNA enters through RuvA and exits via RuvB. An RuvB hexamer assembles on each DNA strand where it exits the tetramer. Each RuvB hexamer is contacted by two RuvA subunits (via domain III) on 2 adjacent RuvB subunits; this complex drives branch migration. In the full resolvosome a probable DNA-RuvA(4)-RuvB(12)-RuvC(2) complex forms which resolves the HJ.</text>
</comment>
<comment type="subcellular location">
    <subcellularLocation>
        <location evidence="1">Cytoplasm</location>
    </subcellularLocation>
</comment>
<comment type="domain">
    <text evidence="1">Has three domains with a flexible linker between the domains II and III and assumes an 'L' shape. Domain III is highly mobile and contacts RuvB.</text>
</comment>
<comment type="similarity">
    <text evidence="1">Belongs to the RuvA family.</text>
</comment>
<sequence length="193" mass="20385">MIGRIAGILLEKNPPHLLVDCNGVGYEIDVPMSTFYNLPQTGERVVLLTQQIVREDAHLLYGFLTPQERTTFRELLKITGIGARMALAVLSGMSVQELAQAVTMQDAARLTRLPGIGKKTAERLLLELKGKLGADLGALAGAASASDHATDILNALLALGYSEKEGLAAIKNVPAGTGVSEGIKLALKALSKA</sequence>